<comment type="function">
    <text evidence="1">Mediates the transport of adenosine 3'-phospho 5'-phosphosulfate (PAPS), from cytosol into Golgi. PAPS is a universal sulfuryl donor for sulfation events that take place in the Golgi. Essential for viability. Involved in glycosaminoglycan synthesis and the subsequent signaling. May be involved in hh and dpp signaling by controlling the sulfation of heparan sulfate (HS) (By similarity).</text>
</comment>
<comment type="subcellular location">
    <subcellularLocation>
        <location evidence="1">Golgi apparatus membrane</location>
        <topology evidence="1">Multi-pass membrane protein</topology>
    </subcellularLocation>
</comment>
<comment type="similarity">
    <text evidence="2">Belongs to the nucleotide-sugar transporter family. SLC35B subfamily.</text>
</comment>
<sequence>MAGAKSEVIYLGDKDLNRNRHRDRDQSPEREIKILFFDLTHYNRTTQFLLCCGGVFALYLVYGYMQELIFTLEGFRPYGWYLTLVQFAYYTAFGYIERSVERTTVPRCIPLRTYALLAFLTLGTMGLSNSSVGYLNYPTQVIFKCCKLIPVLIGSVLIQGKKHGPMDFFAATAMCLGLILFTLADSQVQPDFNRFGVFLISLALLCDAAIGNVQEKAMREHRAPNNEVVIYSYGIGFVYLAVIMLLSGHLVQGVAFCARYPMETYGYAFLFSLTGYLGIQIVLTLVRTCGAPLAATVTTARKAVTIALSFVFFSKPFTIQYLWSGLIVVFGIYLNVYSKRSKLTFADLGRMASTVYRWVLRLPPAKDGGSRTSLLEV</sequence>
<protein>
    <recommendedName>
        <fullName>Adenosine 3'-phospho 5'-phosphosulfate transporter 2</fullName>
    </recommendedName>
    <alternativeName>
        <fullName>PAPS transporter 2</fullName>
    </alternativeName>
    <alternativeName>
        <fullName>Solute carrier family 35 member B3 homolog</fullName>
    </alternativeName>
</protein>
<evidence type="ECO:0000250" key="1">
    <source>
        <dbReference type="UniProtKB" id="Q9VVD9"/>
    </source>
</evidence>
<evidence type="ECO:0000255" key="2"/>
<name>S35B3_ANOGA</name>
<gene>
    <name evidence="1" type="primary">Papst2</name>
    <name type="ORF">AGAP006509</name>
</gene>
<reference key="1">
    <citation type="journal article" date="2002" name="Science">
        <title>The genome sequence of the malaria mosquito Anopheles gambiae.</title>
        <authorList>
            <person name="Holt R.A."/>
            <person name="Subramanian G.M."/>
            <person name="Halpern A."/>
            <person name="Sutton G.G."/>
            <person name="Charlab R."/>
            <person name="Nusskern D.R."/>
            <person name="Wincker P."/>
            <person name="Clark A.G."/>
            <person name="Ribeiro J.M.C."/>
            <person name="Wides R."/>
            <person name="Salzberg S.L."/>
            <person name="Loftus B.J."/>
            <person name="Yandell M.D."/>
            <person name="Majoros W.H."/>
            <person name="Rusch D.B."/>
            <person name="Lai Z."/>
            <person name="Kraft C.L."/>
            <person name="Abril J.F."/>
            <person name="Anthouard V."/>
            <person name="Arensburger P."/>
            <person name="Atkinson P.W."/>
            <person name="Baden H."/>
            <person name="de Berardinis V."/>
            <person name="Baldwin D."/>
            <person name="Benes V."/>
            <person name="Biedler J."/>
            <person name="Blass C."/>
            <person name="Bolanos R."/>
            <person name="Boscus D."/>
            <person name="Barnstead M."/>
            <person name="Cai S."/>
            <person name="Center A."/>
            <person name="Chaturverdi K."/>
            <person name="Christophides G.K."/>
            <person name="Chrystal M.A.M."/>
            <person name="Clamp M."/>
            <person name="Cravchik A."/>
            <person name="Curwen V."/>
            <person name="Dana A."/>
            <person name="Delcher A."/>
            <person name="Dew I."/>
            <person name="Evans C.A."/>
            <person name="Flanigan M."/>
            <person name="Grundschober-Freimoser A."/>
            <person name="Friedli L."/>
            <person name="Gu Z."/>
            <person name="Guan P."/>
            <person name="Guigo R."/>
            <person name="Hillenmeyer M.E."/>
            <person name="Hladun S.L."/>
            <person name="Hogan J.R."/>
            <person name="Hong Y.S."/>
            <person name="Hoover J."/>
            <person name="Jaillon O."/>
            <person name="Ke Z."/>
            <person name="Kodira C.D."/>
            <person name="Kokoza E."/>
            <person name="Koutsos A."/>
            <person name="Letunic I."/>
            <person name="Levitsky A.A."/>
            <person name="Liang Y."/>
            <person name="Lin J.-J."/>
            <person name="Lobo N.F."/>
            <person name="Lopez J.R."/>
            <person name="Malek J.A."/>
            <person name="McIntosh T.C."/>
            <person name="Meister S."/>
            <person name="Miller J.R."/>
            <person name="Mobarry C."/>
            <person name="Mongin E."/>
            <person name="Murphy S.D."/>
            <person name="O'Brochta D.A."/>
            <person name="Pfannkoch C."/>
            <person name="Qi R."/>
            <person name="Regier M.A."/>
            <person name="Remington K."/>
            <person name="Shao H."/>
            <person name="Sharakhova M.V."/>
            <person name="Sitter C.D."/>
            <person name="Shetty J."/>
            <person name="Smith T.J."/>
            <person name="Strong R."/>
            <person name="Sun J."/>
            <person name="Thomasova D."/>
            <person name="Ton L.Q."/>
            <person name="Topalis P."/>
            <person name="Tu Z.J."/>
            <person name="Unger M.F."/>
            <person name="Walenz B."/>
            <person name="Wang A.H."/>
            <person name="Wang J."/>
            <person name="Wang M."/>
            <person name="Wang X."/>
            <person name="Woodford K.J."/>
            <person name="Wortman J.R."/>
            <person name="Wu M."/>
            <person name="Yao A."/>
            <person name="Zdobnov E.M."/>
            <person name="Zhang H."/>
            <person name="Zhao Q."/>
            <person name="Zhao S."/>
            <person name="Zhu S.C."/>
            <person name="Zhimulev I."/>
            <person name="Coluzzi M."/>
            <person name="della Torre A."/>
            <person name="Roth C.W."/>
            <person name="Louis C."/>
            <person name="Kalush F."/>
            <person name="Mural R.J."/>
            <person name="Myers E.W."/>
            <person name="Adams M.D."/>
            <person name="Smith H.O."/>
            <person name="Broder S."/>
            <person name="Gardner M.J."/>
            <person name="Fraser C.M."/>
            <person name="Birney E."/>
            <person name="Bork P."/>
            <person name="Brey P.T."/>
            <person name="Venter J.C."/>
            <person name="Weissenbach J."/>
            <person name="Kafatos F.C."/>
            <person name="Collins F.H."/>
            <person name="Hoffman S.L."/>
        </authorList>
    </citation>
    <scope>NUCLEOTIDE SEQUENCE [LARGE SCALE GENOMIC DNA]</scope>
    <source>
        <strain>PEST</strain>
    </source>
</reference>
<organism>
    <name type="scientific">Anopheles gambiae</name>
    <name type="common">African malaria mosquito</name>
    <dbReference type="NCBI Taxonomy" id="7165"/>
    <lineage>
        <taxon>Eukaryota</taxon>
        <taxon>Metazoa</taxon>
        <taxon>Ecdysozoa</taxon>
        <taxon>Arthropoda</taxon>
        <taxon>Hexapoda</taxon>
        <taxon>Insecta</taxon>
        <taxon>Pterygota</taxon>
        <taxon>Neoptera</taxon>
        <taxon>Endopterygota</taxon>
        <taxon>Diptera</taxon>
        <taxon>Nematocera</taxon>
        <taxon>Culicoidea</taxon>
        <taxon>Culicidae</taxon>
        <taxon>Anophelinae</taxon>
        <taxon>Anopheles</taxon>
    </lineage>
</organism>
<accession>Q7Q5D4</accession>
<feature type="chain" id="PRO_0000307351" description="Adenosine 3'-phospho 5'-phosphosulfate transporter 2">
    <location>
        <begin position="1"/>
        <end position="377"/>
    </location>
</feature>
<feature type="transmembrane region" description="Helical" evidence="2">
    <location>
        <begin position="50"/>
        <end position="70"/>
    </location>
</feature>
<feature type="transmembrane region" description="Helical" evidence="2">
    <location>
        <begin position="77"/>
        <end position="97"/>
    </location>
</feature>
<feature type="transmembrane region" description="Helical" evidence="2">
    <location>
        <begin position="115"/>
        <end position="135"/>
    </location>
</feature>
<feature type="transmembrane region" description="Helical" evidence="2">
    <location>
        <begin position="138"/>
        <end position="158"/>
    </location>
</feature>
<feature type="transmembrane region" description="Helical" evidence="2">
    <location>
        <begin position="164"/>
        <end position="184"/>
    </location>
</feature>
<feature type="transmembrane region" description="Helical" evidence="2">
    <location>
        <begin position="195"/>
        <end position="215"/>
    </location>
</feature>
<feature type="transmembrane region" description="Helical" evidence="2">
    <location>
        <begin position="228"/>
        <end position="248"/>
    </location>
</feature>
<feature type="transmembrane region" description="Helical" evidence="2">
    <location>
        <begin position="266"/>
        <end position="286"/>
    </location>
</feature>
<feature type="transmembrane region" description="Helical" evidence="2">
    <location>
        <begin position="293"/>
        <end position="313"/>
    </location>
</feature>
<feature type="transmembrane region" description="Helical" evidence="2">
    <location>
        <begin position="317"/>
        <end position="337"/>
    </location>
</feature>
<dbReference type="EMBL" id="AAAB01008960">
    <property type="protein sequence ID" value="EAA11308.4"/>
    <property type="molecule type" value="Genomic_DNA"/>
</dbReference>
<dbReference type="RefSeq" id="XP_316536.4">
    <property type="nucleotide sequence ID" value="XM_316536.4"/>
</dbReference>
<dbReference type="SMR" id="Q7Q5D4"/>
<dbReference type="FunCoup" id="Q7Q5D4">
    <property type="interactions" value="1292"/>
</dbReference>
<dbReference type="STRING" id="7165.Q7Q5D4"/>
<dbReference type="PaxDb" id="7165-AGAP006509-PA"/>
<dbReference type="EnsemblMetazoa" id="AGAP006509-RA">
    <property type="protein sequence ID" value="AGAP006509-PA"/>
    <property type="gene ID" value="AGAP006509"/>
</dbReference>
<dbReference type="GeneID" id="1277103"/>
<dbReference type="KEGG" id="aga:1277103"/>
<dbReference type="CTD" id="39914"/>
<dbReference type="VEuPathDB" id="VectorBase:AGAMI1_014710"/>
<dbReference type="VEuPathDB" id="VectorBase:AGAP006509"/>
<dbReference type="eggNOG" id="KOG1582">
    <property type="taxonomic scope" value="Eukaryota"/>
</dbReference>
<dbReference type="HOGENOM" id="CLU_036019_2_0_1"/>
<dbReference type="InParanoid" id="Q7Q5D4"/>
<dbReference type="OMA" id="YNRTTQF"/>
<dbReference type="PhylomeDB" id="Q7Q5D4"/>
<dbReference type="Proteomes" id="UP000007062">
    <property type="component" value="Chromosome 2L"/>
</dbReference>
<dbReference type="GO" id="GO:0005789">
    <property type="term" value="C:endoplasmic reticulum membrane"/>
    <property type="evidence" value="ECO:0000318"/>
    <property type="project" value="GO_Central"/>
</dbReference>
<dbReference type="GO" id="GO:0005794">
    <property type="term" value="C:Golgi apparatus"/>
    <property type="evidence" value="ECO:0000250"/>
    <property type="project" value="UniProtKB"/>
</dbReference>
<dbReference type="GO" id="GO:0000139">
    <property type="term" value="C:Golgi membrane"/>
    <property type="evidence" value="ECO:0000318"/>
    <property type="project" value="GO_Central"/>
</dbReference>
<dbReference type="GO" id="GO:0046964">
    <property type="term" value="F:3'-phosphoadenosine 5'-phosphosulfate transmembrane transporter activity"/>
    <property type="evidence" value="ECO:0000250"/>
    <property type="project" value="UniProtKB"/>
</dbReference>
<dbReference type="GO" id="GO:0046963">
    <property type="term" value="P:3'-phosphoadenosine 5'-phosphosulfate transport"/>
    <property type="evidence" value="ECO:0000250"/>
    <property type="project" value="UniProtKB"/>
</dbReference>
<dbReference type="GO" id="GO:0055085">
    <property type="term" value="P:transmembrane transport"/>
    <property type="evidence" value="ECO:0000318"/>
    <property type="project" value="GO_Central"/>
</dbReference>
<dbReference type="InterPro" id="IPR013657">
    <property type="entry name" value="SCL35B1-4/HUT1"/>
</dbReference>
<dbReference type="PANTHER" id="PTHR10778:SF8">
    <property type="entry name" value="ADENOSINE 3'-PHOSPHO 5'-PHOSPHOSULFATE TRANSPORTER 2"/>
    <property type="match status" value="1"/>
</dbReference>
<dbReference type="PANTHER" id="PTHR10778">
    <property type="entry name" value="SOLUTE CARRIER FAMILY 35 MEMBER B"/>
    <property type="match status" value="1"/>
</dbReference>
<dbReference type="Pfam" id="PF08449">
    <property type="entry name" value="UAA"/>
    <property type="match status" value="1"/>
</dbReference>
<keyword id="KW-0217">Developmental protein</keyword>
<keyword id="KW-0333">Golgi apparatus</keyword>
<keyword id="KW-0472">Membrane</keyword>
<keyword id="KW-1185">Reference proteome</keyword>
<keyword id="KW-0812">Transmembrane</keyword>
<keyword id="KW-1133">Transmembrane helix</keyword>
<keyword id="KW-0813">Transport</keyword>
<proteinExistence type="inferred from homology"/>